<sequence length="133" mass="15080">MNAVQDAQDQLTKLIRCWEPIDSDDLSKGHTMSDPVYQLCSYMPSPKDYNKFHVNGVQMDSDDYTTILTMFANQLPGYAVLNVCLQEAFQFHKANHPSQVSLRCLCQRDGCNLPKTLTDFLDFNKGPIPAVNF</sequence>
<dbReference type="EMBL" id="FO080272">
    <property type="protein sequence ID" value="CCD62505.1"/>
    <property type="molecule type" value="Genomic_DNA"/>
</dbReference>
<dbReference type="PIR" id="T15377">
    <property type="entry name" value="T15377"/>
</dbReference>
<dbReference type="RefSeq" id="NP_509371.1">
    <property type="nucleotide sequence ID" value="NM_076970.5"/>
</dbReference>
<dbReference type="BioGRID" id="46965">
    <property type="interactions" value="3"/>
</dbReference>
<dbReference type="DIP" id="DIP-26756N"/>
<dbReference type="FunCoup" id="Q11093">
    <property type="interactions" value="1"/>
</dbReference>
<dbReference type="IntAct" id="Q11093">
    <property type="interactions" value="1"/>
</dbReference>
<dbReference type="PaxDb" id="6239-C02B8.3"/>
<dbReference type="PeptideAtlas" id="Q11093"/>
<dbReference type="EnsemblMetazoa" id="C02B8.3.1">
    <property type="protein sequence ID" value="C02B8.3.1"/>
    <property type="gene ID" value="WBGene00015322"/>
</dbReference>
<dbReference type="GeneID" id="182104"/>
<dbReference type="KEGG" id="cel:CELE_C02B8.3"/>
<dbReference type="UCSC" id="C02B8.3">
    <property type="organism name" value="c. elegans"/>
</dbReference>
<dbReference type="AGR" id="WB:WBGene00015322"/>
<dbReference type="CTD" id="182104"/>
<dbReference type="WormBase" id="C02B8.3">
    <property type="protein sequence ID" value="CE03892"/>
    <property type="gene ID" value="WBGene00015322"/>
</dbReference>
<dbReference type="eggNOG" id="ENOG502THG1">
    <property type="taxonomic scope" value="Eukaryota"/>
</dbReference>
<dbReference type="GeneTree" id="ENSGT00970000196001"/>
<dbReference type="HOGENOM" id="CLU_116890_0_0_1"/>
<dbReference type="InParanoid" id="Q11093"/>
<dbReference type="OMA" id="TILTMFA"/>
<dbReference type="OrthoDB" id="5805629at2759"/>
<dbReference type="PhylomeDB" id="Q11093"/>
<dbReference type="PRO" id="PR:Q11093"/>
<dbReference type="Proteomes" id="UP000001940">
    <property type="component" value="Chromosome X"/>
</dbReference>
<dbReference type="Bgee" id="WBGene00015322">
    <property type="expression patterns" value="Expressed in larva and 2 other cell types or tissues"/>
</dbReference>
<dbReference type="InterPro" id="IPR035291">
    <property type="entry name" value="DUF5354"/>
</dbReference>
<dbReference type="PANTHER" id="PTHR31712">
    <property type="entry name" value="DIETARY RESTRICTION OVER EXPRESSED"/>
    <property type="match status" value="1"/>
</dbReference>
<dbReference type="PANTHER" id="PTHR31712:SF0">
    <property type="entry name" value="DIETARY RESTRICTION OVER EXPRESSED-RELATED"/>
    <property type="match status" value="1"/>
</dbReference>
<dbReference type="Pfam" id="PF17305">
    <property type="entry name" value="DUF5354"/>
    <property type="match status" value="1"/>
</dbReference>
<name>YWZ3_CAEEL</name>
<gene>
    <name type="ORF">C02B8.3</name>
</gene>
<proteinExistence type="predicted"/>
<organism>
    <name type="scientific">Caenorhabditis elegans</name>
    <dbReference type="NCBI Taxonomy" id="6239"/>
    <lineage>
        <taxon>Eukaryota</taxon>
        <taxon>Metazoa</taxon>
        <taxon>Ecdysozoa</taxon>
        <taxon>Nematoda</taxon>
        <taxon>Chromadorea</taxon>
        <taxon>Rhabditida</taxon>
        <taxon>Rhabditina</taxon>
        <taxon>Rhabditomorpha</taxon>
        <taxon>Rhabditoidea</taxon>
        <taxon>Rhabditidae</taxon>
        <taxon>Peloderinae</taxon>
        <taxon>Caenorhabditis</taxon>
    </lineage>
</organism>
<accession>Q11093</accession>
<reference key="1">
    <citation type="journal article" date="1998" name="Science">
        <title>Genome sequence of the nematode C. elegans: a platform for investigating biology.</title>
        <authorList>
            <consortium name="The C. elegans sequencing consortium"/>
        </authorList>
    </citation>
    <scope>NUCLEOTIDE SEQUENCE [LARGE SCALE GENOMIC DNA]</scope>
    <source>
        <strain>Bristol N2</strain>
    </source>
</reference>
<protein>
    <recommendedName>
        <fullName>Uncharacterized protein C02B8.3</fullName>
    </recommendedName>
</protein>
<keyword id="KW-1185">Reference proteome</keyword>
<feature type="chain" id="PRO_0000065101" description="Uncharacterized protein C02B8.3">
    <location>
        <begin position="1"/>
        <end position="133"/>
    </location>
</feature>